<proteinExistence type="inferred from homology"/>
<keyword id="KW-0238">DNA-binding</keyword>
<keyword id="KW-1185">Reference proteome</keyword>
<keyword id="KW-0804">Transcription</keyword>
<keyword id="KW-0805">Transcription regulation</keyword>
<reference key="1">
    <citation type="journal article" date="2001" name="J. Bacteriol.">
        <title>Genome sequence and comparative analysis of the solvent-producing bacterium Clostridium acetobutylicum.</title>
        <authorList>
            <person name="Noelling J."/>
            <person name="Breton G."/>
            <person name="Omelchenko M.V."/>
            <person name="Makarova K.S."/>
            <person name="Zeng Q."/>
            <person name="Gibson R."/>
            <person name="Lee H.M."/>
            <person name="Dubois J."/>
            <person name="Qiu D."/>
            <person name="Hitti J."/>
            <person name="Wolf Y.I."/>
            <person name="Tatusov R.L."/>
            <person name="Sabathe F."/>
            <person name="Doucette-Stamm L.A."/>
            <person name="Soucaille P."/>
            <person name="Daly M.J."/>
            <person name="Bennett G.N."/>
            <person name="Koonin E.V."/>
            <person name="Smith D.R."/>
        </authorList>
    </citation>
    <scope>NUCLEOTIDE SEQUENCE [LARGE SCALE GENOMIC DNA]</scope>
    <source>
        <strain>ATCC 824 / DSM 792 / JCM 1419 / IAM 19013 / LMG 5710 / NBRC 13948 / NRRL B-527 / VKM B-1787 / 2291 / W</strain>
    </source>
</reference>
<feature type="chain" id="PRO_0000107993" description="HTH-type transcriptional regulator RegA">
    <location>
        <begin position="1"/>
        <end position="334"/>
    </location>
</feature>
<feature type="domain" description="HTH lacI-type" evidence="2">
    <location>
        <begin position="1"/>
        <end position="57"/>
    </location>
</feature>
<feature type="DNA-binding region" description="H-T-H motif" evidence="2">
    <location>
        <begin position="5"/>
        <end position="24"/>
    </location>
</feature>
<protein>
    <recommendedName>
        <fullName>HTH-type transcriptional regulator RegA</fullName>
    </recommendedName>
</protein>
<dbReference type="EMBL" id="AE001437">
    <property type="protein sequence ID" value="AAK80977.1"/>
    <property type="molecule type" value="Genomic_DNA"/>
</dbReference>
<dbReference type="PIR" id="F97273">
    <property type="entry name" value="F97273"/>
</dbReference>
<dbReference type="RefSeq" id="NP_349637.1">
    <property type="nucleotide sequence ID" value="NC_003030.1"/>
</dbReference>
<dbReference type="RefSeq" id="WP_010966318.1">
    <property type="nucleotide sequence ID" value="NC_003030.1"/>
</dbReference>
<dbReference type="SMR" id="P58258"/>
<dbReference type="STRING" id="272562.CA_C3037"/>
<dbReference type="KEGG" id="cac:CA_C3037"/>
<dbReference type="PATRIC" id="fig|272562.8.peg.3220"/>
<dbReference type="eggNOG" id="COG1609">
    <property type="taxonomic scope" value="Bacteria"/>
</dbReference>
<dbReference type="HOGENOM" id="CLU_037628_6_0_9"/>
<dbReference type="OrthoDB" id="9784962at2"/>
<dbReference type="Proteomes" id="UP000000814">
    <property type="component" value="Chromosome"/>
</dbReference>
<dbReference type="GO" id="GO:0003700">
    <property type="term" value="F:DNA-binding transcription factor activity"/>
    <property type="evidence" value="ECO:0007669"/>
    <property type="project" value="TreeGrafter"/>
</dbReference>
<dbReference type="GO" id="GO:0000976">
    <property type="term" value="F:transcription cis-regulatory region binding"/>
    <property type="evidence" value="ECO:0007669"/>
    <property type="project" value="TreeGrafter"/>
</dbReference>
<dbReference type="CDD" id="cd01392">
    <property type="entry name" value="HTH_LacI"/>
    <property type="match status" value="1"/>
</dbReference>
<dbReference type="CDD" id="cd19975">
    <property type="entry name" value="PBP1_CcpA-like"/>
    <property type="match status" value="1"/>
</dbReference>
<dbReference type="Gene3D" id="3.40.50.2300">
    <property type="match status" value="2"/>
</dbReference>
<dbReference type="Gene3D" id="1.10.260.40">
    <property type="entry name" value="lambda repressor-like DNA-binding domains"/>
    <property type="match status" value="1"/>
</dbReference>
<dbReference type="InterPro" id="IPR000843">
    <property type="entry name" value="HTH_LacI"/>
</dbReference>
<dbReference type="InterPro" id="IPR010982">
    <property type="entry name" value="Lambda_DNA-bd_dom_sf"/>
</dbReference>
<dbReference type="InterPro" id="IPR001761">
    <property type="entry name" value="Peripla_BP/Lac1_sug-bd_dom"/>
</dbReference>
<dbReference type="InterPro" id="IPR028082">
    <property type="entry name" value="Peripla_BP_I"/>
</dbReference>
<dbReference type="PANTHER" id="PTHR30146:SF149">
    <property type="entry name" value="HTH-TYPE TRANSCRIPTIONAL REGULATOR EBGR"/>
    <property type="match status" value="1"/>
</dbReference>
<dbReference type="PANTHER" id="PTHR30146">
    <property type="entry name" value="LACI-RELATED TRANSCRIPTIONAL REPRESSOR"/>
    <property type="match status" value="1"/>
</dbReference>
<dbReference type="Pfam" id="PF00356">
    <property type="entry name" value="LacI"/>
    <property type="match status" value="1"/>
</dbReference>
<dbReference type="Pfam" id="PF00532">
    <property type="entry name" value="Peripla_BP_1"/>
    <property type="match status" value="1"/>
</dbReference>
<dbReference type="PRINTS" id="PR00036">
    <property type="entry name" value="HTHLACI"/>
</dbReference>
<dbReference type="SMART" id="SM00354">
    <property type="entry name" value="HTH_LACI"/>
    <property type="match status" value="1"/>
</dbReference>
<dbReference type="SUPFAM" id="SSF47413">
    <property type="entry name" value="lambda repressor-like DNA-binding domains"/>
    <property type="match status" value="1"/>
</dbReference>
<dbReference type="SUPFAM" id="SSF53822">
    <property type="entry name" value="Periplasmic binding protein-like I"/>
    <property type="match status" value="1"/>
</dbReference>
<dbReference type="PROSITE" id="PS00356">
    <property type="entry name" value="HTH_LACI_1"/>
    <property type="match status" value="1"/>
</dbReference>
<dbReference type="PROSITE" id="PS50932">
    <property type="entry name" value="HTH_LACI_2"/>
    <property type="match status" value="1"/>
</dbReference>
<organism>
    <name type="scientific">Clostridium acetobutylicum (strain ATCC 824 / DSM 792 / JCM 1419 / IAM 19013 / LMG 5710 / NBRC 13948 / NRRL B-527 / VKM B-1787 / 2291 / W)</name>
    <dbReference type="NCBI Taxonomy" id="272562"/>
    <lineage>
        <taxon>Bacteria</taxon>
        <taxon>Bacillati</taxon>
        <taxon>Bacillota</taxon>
        <taxon>Clostridia</taxon>
        <taxon>Eubacteriales</taxon>
        <taxon>Clostridiaceae</taxon>
        <taxon>Clostridium</taxon>
    </lineage>
</organism>
<comment type="function">
    <text evidence="1">Involved in the regulation of amylase production.</text>
</comment>
<accession>P58258</accession>
<gene>
    <name type="primary">regA</name>
    <name type="ordered locus">CA_C3037</name>
</gene>
<name>REGA_CLOAB</name>
<sequence>MAASIKDVAREARVSIATVSRVLNNVDVVNEETKKKVMEAIKKLDYRPNIVARSLKTQRTRTIGIVIPDISSQFYPEIVRGAEDVSNIYNYNVILCNTDLDISKEKDYIRVLKEKMVDGVIYMSNSLAPEILQLLRDLKIPTVLVETRESEDENAFPSVTIDNAKAAYDAVNYLIKKGNNKIAYVGVNPKLKNNARAIIYEGYKKALLDNNIPLNENLIQFGGLKAIDGTDGINVIIKKEKIDAVFCACDEIAMGAINALRENGIDVPKDVDVVGFDNIYTSSIFYPKLTTIEQPTYDMGSVGMRMLIKIINKAEPECLHYVLDYNIIERDSCK</sequence>
<evidence type="ECO:0000250" key="1"/>
<evidence type="ECO:0000255" key="2">
    <source>
        <dbReference type="PROSITE-ProRule" id="PRU00111"/>
    </source>
</evidence>